<sequence length="309" mass="35302">MPIRIPDALPAVNFLRNENVFVMTDSRAAVQEIRPLKVLLLNLMPKKIETENQFLRLLSNSPLQIDIQLLRIDRRESKNTPMEHLNNFYCHFEDIQQENFDGLVVTGAPLGQVDFGDVAYWSQIVQVIEWARAHVTSTLFVCWAAQAALNILYGLPKMTRAQKLSGVYEHQTLNPLALLTRGFDEGFLAPHSRYADFPPQAIREHTDLQIFAESAQAGAYLFASVDKRTVFVTGHPEYDAHTLGAEYWRDLHAGLTPALPFNYFPQDNSDGTPLATWRSHGHLLFSNWLNYCVYQITPYDLRQMNPTLE</sequence>
<reference key="1">
    <citation type="submission" date="2009-03" db="EMBL/GenBank/DDBJ databases">
        <title>Complete genome sequence of Edwardsiella ictaluri 93-146.</title>
        <authorList>
            <person name="Williams M.L."/>
            <person name="Gillaspy A.F."/>
            <person name="Dyer D.W."/>
            <person name="Thune R.L."/>
            <person name="Waldbieser G.C."/>
            <person name="Schuster S.C."/>
            <person name="Gipson J."/>
            <person name="Zaitshik J."/>
            <person name="Landry C."/>
            <person name="Lawrence M.L."/>
        </authorList>
    </citation>
    <scope>NUCLEOTIDE SEQUENCE [LARGE SCALE GENOMIC DNA]</scope>
    <source>
        <strain>93-146</strain>
    </source>
</reference>
<organism>
    <name type="scientific">Edwardsiella ictaluri (strain 93-146)</name>
    <dbReference type="NCBI Taxonomy" id="634503"/>
    <lineage>
        <taxon>Bacteria</taxon>
        <taxon>Pseudomonadati</taxon>
        <taxon>Pseudomonadota</taxon>
        <taxon>Gammaproteobacteria</taxon>
        <taxon>Enterobacterales</taxon>
        <taxon>Hafniaceae</taxon>
        <taxon>Edwardsiella</taxon>
    </lineage>
</organism>
<accession>C5BF07</accession>
<comment type="function">
    <text evidence="1">Transfers a succinyl group from succinyl-CoA to L-homoserine, forming succinyl-L-homoserine.</text>
</comment>
<comment type="catalytic activity">
    <reaction evidence="1">
        <text>L-homoserine + succinyl-CoA = O-succinyl-L-homoserine + CoA</text>
        <dbReference type="Rhea" id="RHEA:22008"/>
        <dbReference type="ChEBI" id="CHEBI:57287"/>
        <dbReference type="ChEBI" id="CHEBI:57292"/>
        <dbReference type="ChEBI" id="CHEBI:57476"/>
        <dbReference type="ChEBI" id="CHEBI:57661"/>
        <dbReference type="EC" id="2.3.1.46"/>
    </reaction>
</comment>
<comment type="pathway">
    <text evidence="1">Amino-acid biosynthesis; L-methionine biosynthesis via de novo pathway; O-succinyl-L-homoserine from L-homoserine: step 1/1.</text>
</comment>
<comment type="subcellular location">
    <subcellularLocation>
        <location evidence="1">Cytoplasm</location>
    </subcellularLocation>
</comment>
<comment type="similarity">
    <text evidence="1">Belongs to the MetA family.</text>
</comment>
<dbReference type="EC" id="2.3.1.46" evidence="1"/>
<dbReference type="EMBL" id="CP001600">
    <property type="protein sequence ID" value="ACR70679.1"/>
    <property type="molecule type" value="Genomic_DNA"/>
</dbReference>
<dbReference type="SMR" id="C5BF07"/>
<dbReference type="STRING" id="67780.B6E78_09315"/>
<dbReference type="KEGG" id="eic:NT01EI_3543"/>
<dbReference type="HOGENOM" id="CLU_057851_0_1_6"/>
<dbReference type="OrthoDB" id="9772423at2"/>
<dbReference type="UniPathway" id="UPA00051">
    <property type="reaction ID" value="UER00075"/>
</dbReference>
<dbReference type="Proteomes" id="UP000001485">
    <property type="component" value="Chromosome"/>
</dbReference>
<dbReference type="GO" id="GO:0005737">
    <property type="term" value="C:cytoplasm"/>
    <property type="evidence" value="ECO:0007669"/>
    <property type="project" value="UniProtKB-SubCell"/>
</dbReference>
<dbReference type="GO" id="GO:0004414">
    <property type="term" value="F:homoserine O-acetyltransferase activity"/>
    <property type="evidence" value="ECO:0007669"/>
    <property type="project" value="UniProtKB-UniRule"/>
</dbReference>
<dbReference type="GO" id="GO:0008899">
    <property type="term" value="F:homoserine O-succinyltransferase activity"/>
    <property type="evidence" value="ECO:0007669"/>
    <property type="project" value="UniProtKB-EC"/>
</dbReference>
<dbReference type="GO" id="GO:0019281">
    <property type="term" value="P:L-methionine biosynthetic process from homoserine via O-succinyl-L-homoserine and cystathionine"/>
    <property type="evidence" value="ECO:0007669"/>
    <property type="project" value="InterPro"/>
</dbReference>
<dbReference type="CDD" id="cd03131">
    <property type="entry name" value="GATase1_HTS"/>
    <property type="match status" value="1"/>
</dbReference>
<dbReference type="FunFam" id="3.40.50.880:FF:000004">
    <property type="entry name" value="Homoserine O-succinyltransferase"/>
    <property type="match status" value="1"/>
</dbReference>
<dbReference type="Gene3D" id="3.40.50.880">
    <property type="match status" value="1"/>
</dbReference>
<dbReference type="HAMAP" id="MF_00295">
    <property type="entry name" value="MetA_acyltransf"/>
    <property type="match status" value="1"/>
</dbReference>
<dbReference type="InterPro" id="IPR029062">
    <property type="entry name" value="Class_I_gatase-like"/>
</dbReference>
<dbReference type="InterPro" id="IPR005697">
    <property type="entry name" value="HST_MetA"/>
</dbReference>
<dbReference type="InterPro" id="IPR033752">
    <property type="entry name" value="MetA_family"/>
</dbReference>
<dbReference type="NCBIfam" id="TIGR01001">
    <property type="entry name" value="metA"/>
    <property type="match status" value="1"/>
</dbReference>
<dbReference type="PANTHER" id="PTHR20919">
    <property type="entry name" value="HOMOSERINE O-SUCCINYLTRANSFERASE"/>
    <property type="match status" value="1"/>
</dbReference>
<dbReference type="PANTHER" id="PTHR20919:SF0">
    <property type="entry name" value="HOMOSERINE O-SUCCINYLTRANSFERASE"/>
    <property type="match status" value="1"/>
</dbReference>
<dbReference type="Pfam" id="PF04204">
    <property type="entry name" value="HTS"/>
    <property type="match status" value="1"/>
</dbReference>
<dbReference type="PIRSF" id="PIRSF000450">
    <property type="entry name" value="H_ser_succinyltr"/>
    <property type="match status" value="1"/>
</dbReference>
<dbReference type="SUPFAM" id="SSF52317">
    <property type="entry name" value="Class I glutamine amidotransferase-like"/>
    <property type="match status" value="1"/>
</dbReference>
<gene>
    <name evidence="1" type="primary">metAS</name>
    <name type="ordered locus">NT01EI_3543</name>
</gene>
<keyword id="KW-0012">Acyltransferase</keyword>
<keyword id="KW-0028">Amino-acid biosynthesis</keyword>
<keyword id="KW-0963">Cytoplasm</keyword>
<keyword id="KW-0486">Methionine biosynthesis</keyword>
<keyword id="KW-0808">Transferase</keyword>
<proteinExistence type="inferred from homology"/>
<protein>
    <recommendedName>
        <fullName evidence="1">Homoserine O-succinyltransferase</fullName>
        <shortName evidence="1">HST</shortName>
        <ecNumber evidence="1">2.3.1.46</ecNumber>
    </recommendedName>
    <alternativeName>
        <fullName evidence="1">Homoserine transsuccinylase</fullName>
        <shortName evidence="1">HTS</shortName>
    </alternativeName>
</protein>
<name>METAS_EDWI9</name>
<evidence type="ECO:0000255" key="1">
    <source>
        <dbReference type="HAMAP-Rule" id="MF_00295"/>
    </source>
</evidence>
<feature type="chain" id="PRO_1000204920" description="Homoserine O-succinyltransferase">
    <location>
        <begin position="1"/>
        <end position="309"/>
    </location>
</feature>
<feature type="active site" description="Acyl-thioester intermediate" evidence="1">
    <location>
        <position position="142"/>
    </location>
</feature>
<feature type="active site" description="Proton acceptor" evidence="1">
    <location>
        <position position="235"/>
    </location>
</feature>
<feature type="active site" evidence="1">
    <location>
        <position position="237"/>
    </location>
</feature>
<feature type="binding site" evidence="1">
    <location>
        <position position="163"/>
    </location>
    <ligand>
        <name>substrate</name>
    </ligand>
</feature>
<feature type="binding site" evidence="1">
    <location>
        <position position="192"/>
    </location>
    <ligand>
        <name>substrate</name>
    </ligand>
</feature>
<feature type="binding site" evidence="1">
    <location>
        <position position="249"/>
    </location>
    <ligand>
        <name>substrate</name>
    </ligand>
</feature>
<feature type="site" description="Important for acyl-CoA specificity" evidence="1">
    <location>
        <position position="111"/>
    </location>
</feature>
<feature type="site" description="Important for substrate specificity" evidence="1">
    <location>
        <position position="192"/>
    </location>
</feature>